<proteinExistence type="inferred from homology"/>
<evidence type="ECO:0000250" key="1">
    <source>
        <dbReference type="UniProtKB" id="P11207"/>
    </source>
</evidence>
<evidence type="ECO:0000250" key="2">
    <source>
        <dbReference type="UniProtKB" id="P30927"/>
    </source>
</evidence>
<evidence type="ECO:0000250" key="3">
    <source>
        <dbReference type="UniProtKB" id="P30928"/>
    </source>
</evidence>
<evidence type="ECO:0000250" key="4">
    <source>
        <dbReference type="UniProtKB" id="Q8QV69"/>
    </source>
</evidence>
<evidence type="ECO:0000256" key="5">
    <source>
        <dbReference type="SAM" id="MobiDB-lite"/>
    </source>
</evidence>
<evidence type="ECO:0000269" key="6">
    <source>
    </source>
</evidence>
<evidence type="ECO:0000305" key="7"/>
<protein>
    <recommendedName>
        <fullName>Non-structural protein V</fullName>
    </recommendedName>
    <alternativeName>
        <fullName>Non-structural protein NS1</fullName>
    </alternativeName>
</protein>
<comment type="function">
    <text evidence="2 3">Plays an essential role in the inhibition of host immune response. Prevents the establishment of cellular antiviral state by blocking interferon-alpha/beta (IFN-alpha/beta) production and signaling pathway. Interacts with host IFIH1/MDA5 and DHX58/LGP2 to inhibit the transduction pathway involved in the activation of IFN-beta promoter, thus protecting the virus against cell antiviral state (By similarity). Blocks the type I and II interferon signaling pathways by interacting with host STAT1, STAT2 and STAT3, and mediating their ubiquitination and subsequent proteasomal degradation (By similarity).</text>
</comment>
<comment type="subunit">
    <text evidence="2 3">Interacts with host IFIH1/MDA5 and DHX58/LGP2 (By similarity). Forms with host DDB1, CUL4A, STAT1, STAT2 and STAT3 the mumps virus V-dependent complex (VDC) (By similarity).</text>
</comment>
<comment type="subcellular location">
    <subcellularLocation>
        <location evidence="4">Virion</location>
    </subcellularLocation>
    <subcellularLocation>
        <location evidence="7">Host cytoplasm</location>
    </subcellularLocation>
</comment>
<comment type="RNA editing">
    <location>
        <position position="155" evidence="6"/>
    </location>
    <text>Partially edited. RNA editing at this position consists of an insertion of 2 or 4 guanine nucleotides. The sequence displayed here is the V protein, derived from the unedited RNA. The edited RNA (+ 2 nucleotides) gives rise to the P protein (AC P60166). The edited RNA (+ 4 nucleotide) gives rise to the I protein.</text>
</comment>
<comment type="similarity">
    <text evidence="7">Belongs to the paramyxoviruses V protein family.</text>
</comment>
<organism>
    <name type="scientific">Mumps virus (strain SBL)</name>
    <name type="common">MuV</name>
    <dbReference type="NCBI Taxonomy" id="33729"/>
    <lineage>
        <taxon>Viruses</taxon>
        <taxon>Riboviria</taxon>
        <taxon>Orthornavirae</taxon>
        <taxon>Negarnaviricota</taxon>
        <taxon>Haploviricotina</taxon>
        <taxon>Monjiviricetes</taxon>
        <taxon>Mononegavirales</taxon>
        <taxon>Paramyxoviridae</taxon>
        <taxon>Rubulavirinae</taxon>
        <taxon>Orthorubulavirus</taxon>
        <taxon>Orthorubulavirus parotitidis</taxon>
        <taxon>Mumps orthorubulavirus</taxon>
    </lineage>
</organism>
<reference key="1">
    <citation type="journal article" date="1990" name="J. Gen. Virol.">
        <title>Strain-variable editing during transcription of the P gene of mumps virus may lead to the generation of non-structural proteins NS1 (V) and NS2.</title>
        <authorList>
            <person name="Elliott G.D."/>
            <person name="Yeo R.P."/>
            <person name="Afzal M.A."/>
            <person name="Simpson E.J.B."/>
            <person name="Curran J.A."/>
            <person name="Rima B.K."/>
        </authorList>
    </citation>
    <scope>NUCLEOTIDE SEQUENCE [GENOMIC RNA]</scope>
    <scope>RNA EDITING</scope>
</reference>
<name>V_MUMPS</name>
<feature type="chain" id="PRO_0000142821" description="Non-structural protein V">
    <location>
        <begin position="1"/>
        <end position="224"/>
    </location>
</feature>
<feature type="region of interest" description="Disordered" evidence="5">
    <location>
        <begin position="54"/>
        <end position="96"/>
    </location>
</feature>
<feature type="region of interest" description="Disordered" evidence="5">
    <location>
        <begin position="150"/>
        <end position="171"/>
    </location>
</feature>
<feature type="compositionally biased region" description="Polar residues" evidence="5">
    <location>
        <begin position="54"/>
        <end position="65"/>
    </location>
</feature>
<feature type="binding site" evidence="1">
    <location>
        <position position="170"/>
    </location>
    <ligand>
        <name>Zn(2+)</name>
        <dbReference type="ChEBI" id="CHEBI:29105"/>
        <label>1</label>
    </ligand>
</feature>
<feature type="binding site" evidence="1">
    <location>
        <position position="189"/>
    </location>
    <ligand>
        <name>Zn(2+)</name>
        <dbReference type="ChEBI" id="CHEBI:29105"/>
        <label>1</label>
    </ligand>
</feature>
<feature type="binding site" evidence="1">
    <location>
        <position position="193"/>
    </location>
    <ligand>
        <name>Zn(2+)</name>
        <dbReference type="ChEBI" id="CHEBI:29105"/>
        <label>2</label>
    </ligand>
</feature>
<feature type="binding site" evidence="1">
    <location>
        <position position="205"/>
    </location>
    <ligand>
        <name>Zn(2+)</name>
        <dbReference type="ChEBI" id="CHEBI:29105"/>
        <label>2</label>
    </ligand>
</feature>
<feature type="binding site" evidence="1">
    <location>
        <position position="207"/>
    </location>
    <ligand>
        <name>Zn(2+)</name>
        <dbReference type="ChEBI" id="CHEBI:29105"/>
        <label>2</label>
    </ligand>
</feature>
<feature type="binding site" evidence="1">
    <location>
        <position position="210"/>
    </location>
    <ligand>
        <name>Zn(2+)</name>
        <dbReference type="ChEBI" id="CHEBI:29105"/>
        <label>2</label>
    </ligand>
</feature>
<feature type="binding site" evidence="1">
    <location>
        <position position="214"/>
    </location>
    <ligand>
        <name>Zn(2+)</name>
        <dbReference type="ChEBI" id="CHEBI:29105"/>
        <label>1</label>
    </ligand>
</feature>
<feature type="binding site" evidence="1">
    <location>
        <position position="217"/>
    </location>
    <ligand>
        <name>Zn(2+)</name>
        <dbReference type="ChEBI" id="CHEBI:29105"/>
        <label>1</label>
    </ligand>
</feature>
<accession>P33483</accession>
<gene>
    <name evidence="7" type="primary">P/V/I</name>
</gene>
<dbReference type="EMBL" id="D00663">
    <property type="protein sequence ID" value="BAA00559.1"/>
    <property type="molecule type" value="Genomic_RNA"/>
</dbReference>
<dbReference type="PIR" id="JQ0597">
    <property type="entry name" value="JQ0597"/>
</dbReference>
<dbReference type="SMR" id="P33483"/>
<dbReference type="GO" id="GO:0030430">
    <property type="term" value="C:host cell cytoplasm"/>
    <property type="evidence" value="ECO:0007669"/>
    <property type="project" value="UniProtKB-SubCell"/>
</dbReference>
<dbReference type="GO" id="GO:0046872">
    <property type="term" value="F:metal ion binding"/>
    <property type="evidence" value="ECO:0007669"/>
    <property type="project" value="UniProtKB-KW"/>
</dbReference>
<dbReference type="GO" id="GO:0060090">
    <property type="term" value="F:molecular adaptor activity"/>
    <property type="evidence" value="ECO:0000314"/>
    <property type="project" value="UniProt"/>
</dbReference>
<dbReference type="GO" id="GO:0039554">
    <property type="term" value="P:symbiont-mediated suppression of host cytoplasmic pattern recognition receptor signaling pathway via inhibition of MDA-5 activity"/>
    <property type="evidence" value="ECO:0007669"/>
    <property type="project" value="UniProtKB-KW"/>
</dbReference>
<dbReference type="GO" id="GO:0039563">
    <property type="term" value="P:symbiont-mediated suppression of host JAK-STAT cascade via inhibition of STAT1 activity"/>
    <property type="evidence" value="ECO:0007669"/>
    <property type="project" value="UniProtKB-KW"/>
</dbReference>
<dbReference type="GO" id="GO:0039564">
    <property type="term" value="P:symbiont-mediated suppression of host JAK-STAT cascade via inhibition of STAT2 activity"/>
    <property type="evidence" value="ECO:0000314"/>
    <property type="project" value="UniProt"/>
</dbReference>
<dbReference type="GO" id="GO:0039502">
    <property type="term" value="P:symbiont-mediated suppression of host type I interferon-mediated signaling pathway"/>
    <property type="evidence" value="ECO:0007669"/>
    <property type="project" value="UniProtKB-KW"/>
</dbReference>
<dbReference type="FunFam" id="4.10.80.340:FF:000001">
    <property type="entry name" value="Protein V"/>
    <property type="match status" value="1"/>
</dbReference>
<dbReference type="Gene3D" id="4.10.80.340">
    <property type="match status" value="1"/>
</dbReference>
<dbReference type="InterPro" id="IPR024279">
    <property type="entry name" value="Paramyx_V_Zn-bd"/>
</dbReference>
<dbReference type="Pfam" id="PF13008">
    <property type="entry name" value="zf-Paramyx-P"/>
    <property type="match status" value="1"/>
</dbReference>
<sequence length="224" mass="24011">MDQFIKQDETGDLIETGMNVANHFLSAPIQGTNSLSKASIIPGVAPVLIGNPEQKNIQHPTASHQGSKSKGSGSGVRSIIVPPSEAGNGGTQDPEPLFAQTGQGGIVTTVYQDPTIQPTGSSRSVELAKIGKERMINRFVEKPRISTPVTEFKRGAGSGCSRPDNPRGGHRREWSLSWVQGEVRVFEWCNPICSPITAAARFHSCKCGNCPAKCDQCERDYGPP</sequence>
<keyword id="KW-1035">Host cytoplasm</keyword>
<keyword id="KW-0945">Host-virus interaction</keyword>
<keyword id="KW-1090">Inhibition of host innate immune response by virus</keyword>
<keyword id="KW-1114">Inhibition of host interferon signaling pathway by virus</keyword>
<keyword id="KW-1089">Inhibition of host MDA5 by virus</keyword>
<keyword id="KW-1113">Inhibition of host RLR pathway by virus</keyword>
<keyword id="KW-1105">Inhibition of host STAT1 by virus</keyword>
<keyword id="KW-1106">Inhibition of host STAT2 by virus</keyword>
<keyword id="KW-0922">Interferon antiviral system evasion</keyword>
<keyword id="KW-0479">Metal-binding</keyword>
<keyword id="KW-0691">RNA editing</keyword>
<keyword id="KW-0899">Viral immunoevasion</keyword>
<keyword id="KW-0946">Virion</keyword>
<keyword id="KW-0862">Zinc</keyword>
<organismHost>
    <name type="scientific">Homo sapiens</name>
    <name type="common">Human</name>
    <dbReference type="NCBI Taxonomy" id="9606"/>
</organismHost>